<accession>Q4E409</accession>
<evidence type="ECO:0000250" key="1">
    <source>
        <dbReference type="UniProtKB" id="P47075"/>
    </source>
</evidence>
<evidence type="ECO:0000250" key="2">
    <source>
        <dbReference type="UniProtKB" id="Q382V9"/>
    </source>
</evidence>
<evidence type="ECO:0000255" key="3"/>
<evidence type="ECO:0000269" key="4">
    <source>
    </source>
</evidence>
<evidence type="ECO:0000305" key="5"/>
<keyword id="KW-0067">ATP-binding</keyword>
<keyword id="KW-0464">Manganese</keyword>
<keyword id="KW-0472">Membrane</keyword>
<keyword id="KW-0479">Metal-binding</keyword>
<keyword id="KW-0547">Nucleotide-binding</keyword>
<keyword id="KW-1185">Reference proteome</keyword>
<keyword id="KW-0808">Transferase</keyword>
<keyword id="KW-0812">Transmembrane</keyword>
<keyword id="KW-1133">Transmembrane helix</keyword>
<gene>
    <name type="ORF">Tc00.1047053511127.100</name>
</gene>
<feature type="chain" id="PRO_0000457148" description="Vacuolar transporter chaperone complex subunit 4">
    <location>
        <begin position="1"/>
        <end position="801"/>
    </location>
</feature>
<feature type="topological domain" description="Cytoplasmic" evidence="1">
    <location>
        <begin position="1"/>
        <end position="692"/>
    </location>
</feature>
<feature type="transmembrane region" description="Helical" evidence="3">
    <location>
        <begin position="693"/>
        <end position="713"/>
    </location>
</feature>
<feature type="topological domain" description="Vacuolar" evidence="1">
    <location>
        <begin position="714"/>
        <end position="723"/>
    </location>
</feature>
<feature type="transmembrane region" description="Helical" evidence="3">
    <location>
        <begin position="724"/>
        <end position="744"/>
    </location>
</feature>
<feature type="topological domain" description="Cytoplasmic" evidence="1">
    <location>
        <begin position="745"/>
        <end position="768"/>
    </location>
</feature>
<feature type="transmembrane region" description="Helical" evidence="3">
    <location>
        <begin position="769"/>
        <end position="789"/>
    </location>
</feature>
<feature type="topological domain" description="Vacuolar" evidence="1">
    <location>
        <begin position="790"/>
        <end position="801"/>
    </location>
</feature>
<feature type="active site" evidence="1">
    <location>
        <position position="473"/>
    </location>
</feature>
<feature type="binding site" evidence="1">
    <location>
        <position position="215"/>
    </location>
    <ligand>
        <name>ATP</name>
        <dbReference type="ChEBI" id="CHEBI:30616"/>
    </ligand>
</feature>
<feature type="binding site" evidence="1">
    <location>
        <position position="286"/>
    </location>
    <ligand>
        <name>ATP</name>
        <dbReference type="ChEBI" id="CHEBI:30616"/>
    </ligand>
</feature>
<feature type="binding site" evidence="1">
    <location>
        <position position="288"/>
    </location>
    <ligand>
        <name>ATP</name>
        <dbReference type="ChEBI" id="CHEBI:30616"/>
    </ligand>
</feature>
<feature type="binding site" evidence="1">
    <location>
        <position position="312"/>
    </location>
    <ligand>
        <name>ATP</name>
        <dbReference type="ChEBI" id="CHEBI:30616"/>
    </ligand>
</feature>
<feature type="binding site" evidence="1">
    <location>
        <position position="325"/>
    </location>
    <ligand>
        <name>ATP</name>
        <dbReference type="ChEBI" id="CHEBI:30616"/>
    </ligand>
</feature>
<feature type="binding site" evidence="1">
    <location>
        <position position="391"/>
    </location>
    <ligand>
        <name>ATP</name>
        <dbReference type="ChEBI" id="CHEBI:30616"/>
    </ligand>
</feature>
<feature type="binding site" evidence="1">
    <location>
        <position position="441"/>
    </location>
    <ligand>
        <name>Mn(2+)</name>
        <dbReference type="ChEBI" id="CHEBI:29035"/>
    </ligand>
</feature>
<protein>
    <recommendedName>
        <fullName>Vacuolar transporter chaperone complex subunit 4</fullName>
    </recommendedName>
    <alternativeName>
        <fullName>Polyphosphate kinase</fullName>
    </alternativeName>
    <alternativeName>
        <fullName>SPX-dependent polyphosphate polymerase VTC subunit 4</fullName>
    </alternativeName>
    <alternativeName>
        <fullName>Vacuolar membrane polyphosphate polymerase catalytic subunit</fullName>
        <shortName>PolyP polymerase</shortName>
        <ecNumber evidence="1">2.7.4.1</ecNumber>
    </alternativeName>
</protein>
<comment type="function">
    <text evidence="1 2 4">Component of a polyphosphate synthase complex that utilizes ATP to synthesize and translocate polyphosphate to acidocalcisomes in epimastigotes, insect-stages of Trypanosoma brucei (PubMed:24386955). Catalytic subunit of the vacuolar transporter chaperone (VTC) complex. The VTC complex acts as a vacuolar polyphosphate polymerase that catalyzes the synthesis of inorganic polyphosphate (polyP) via transfer of phosphate from ATP to a growing polyP chain, releasing ADP. VTC exposes its catalytic domain vtc4 to the cytosol, where the growing polyP chain winds through a tunnel-shaped pocket, integrating cytoplasmic polymer synthesis with polyP membrane translocation. The VTC complex carries 9 vacuolar transmembrane domains, which are likely to constitute the translocation channel into the organelle lumen. PolyP synthesis is tightly coupled to its transport into the vacuole lumen, in order to avoid otherwise toxic intermediates in the cytosol, and it depends on the proton gradient across the membrane, formed by V-ATPase. The VTC complex also plays a role in vacuolar membrane fusion (By similarity). Essential for infection and parasite survival in the mammalian host (By similarity).</text>
</comment>
<comment type="catalytic activity">
    <reaction evidence="4">
        <text>[phosphate](n) + ATP = [phosphate](n+1) + ADP</text>
        <dbReference type="Rhea" id="RHEA:19573"/>
        <dbReference type="Rhea" id="RHEA-COMP:9859"/>
        <dbReference type="Rhea" id="RHEA-COMP:14280"/>
        <dbReference type="ChEBI" id="CHEBI:16838"/>
        <dbReference type="ChEBI" id="CHEBI:30616"/>
        <dbReference type="ChEBI" id="CHEBI:456216"/>
        <dbReference type="EC" id="2.7.4.1"/>
    </reaction>
    <physiologicalReaction direction="left-to-right" evidence="4">
        <dbReference type="Rhea" id="RHEA:19574"/>
    </physiologicalReaction>
</comment>
<comment type="cofactor">
    <cofactor evidence="1">
        <name>Mn(2+)</name>
        <dbReference type="ChEBI" id="CHEBI:29035"/>
    </cofactor>
</comment>
<comment type="activity regulation">
    <text evidence="1">Activity of the enzyme is Mn(2+)-dependent and enhanced in the presence of pyrophosphate (PPi).</text>
</comment>
<comment type="biophysicochemical properties">
    <kinetics>
        <KM evidence="4">103.4 uM for ATP</KM>
        <Vmax>5.1 umol/min/mg enzyme</Vmax>
    </kinetics>
</comment>
<comment type="subunit">
    <text evidence="1">The VTC core complex is an integral membrane heterooligomer composed of at least the catalytic subunit vtc4 and the accessory subunits vtc1 and vtc2. vtc1 is a small membrane protein without hydrophilic domain. Vtc2 and vtc4 are related and have 2 hydrophilic domains that face the cytosol, an N-terminal SPX domain and the central core domain. The central core in vtc4 is the catalytic domain.</text>
</comment>
<comment type="subcellular location">
    <subcellularLocation>
        <location evidence="4">Acidocalcisome membrane</location>
        <topology evidence="3">Multi-pass membrane protein</topology>
    </subcellularLocation>
</comment>
<comment type="domain">
    <text evidence="1">The SPX domain has very high affinity for inositol polyphosphates. SPX domains may integrate inositol pyrophosphates (PP-InsP)-dependent signaling to adapt cytosolic phosphate concentrations to different metabolic situations.</text>
</comment>
<comment type="disruption phenotype">
    <text evidence="4">Results in growth defects in procyclic forms (PCF) and changes in acidocalcisome morphology and number. The mean number of acidocalcisomes drops by approximately 2-fold, but individual acidocalcisomes are considerably larger and less circular. Also affects cellular polyP and PPi content. Short chain polyP drops almost 2-fold, while PPi nearly doubles.</text>
</comment>
<comment type="similarity">
    <text evidence="5">Belongs to the VTC4 family.</text>
</comment>
<organism>
    <name type="scientific">Trypanosoma cruzi (strain CL Brener)</name>
    <dbReference type="NCBI Taxonomy" id="353153"/>
    <lineage>
        <taxon>Eukaryota</taxon>
        <taxon>Discoba</taxon>
        <taxon>Euglenozoa</taxon>
        <taxon>Kinetoplastea</taxon>
        <taxon>Metakinetoplastina</taxon>
        <taxon>Trypanosomatida</taxon>
        <taxon>Trypanosomatidae</taxon>
        <taxon>Trypanosoma</taxon>
        <taxon>Schizotrypanum</taxon>
    </lineage>
</organism>
<proteinExistence type="evidence at protein level"/>
<sequence>MPFSKAWRSAVYPDFREQGAYINYKATKDILHRMKEDIANPSTPDELYNSLLLQKCRVYKWCEKKIKELLTVAEALMAASDYLTEEDTKTNLSLVLNTLGSGNMKCLPPNEARLLADSITHELLRFVECCNLNTDTIEHIIGRMYRYAVLGPTGKHWNNIMTEYDYHKLSIHEIFYLLSKVYDRVTATENMRIVKRSGIPAGTVGSQVFDRRSVKYWVHLQDLPFVIARIIPHLPHSTFKETYQTCKERNIPFTLGSPVSSVYWDNNEFLLYHRRLERLEGATLIRMRWYGDPLENDWNKLGPNDSVFMEIKVHHEAWSGERSNKRRFALKEKEVNSYVHGELDLNPALEKLRAKKASKKELHNFMDLSTEIVTKIDAYDLKPVIRTQCSRAAFQRGIDQSIRVSIDTDLRVCAEDFGLGHHWRYSGVDAPVSYFPYAVVEIKLQCAENERIAPWIEELMSCRYMESVPKFSKYAHGIASLYGHTPFIKMVPYWMHQLDIDIRASTKPEQNQWDPTVGLASGCWERTTDRAIFGVGHAQTQTVGASEAQFLPRTDYTRVYQKALHGIRGEGVATPATADNFQDAEAEGGCASGTAGSRKQQLQPRLPAHTLQYDVDRRHKAYTTFHLYPFAEYGVESLCFTPASGKNAAAEVLSGLIPWQTGKRIRVPQKYDPKTLLTSERYMLKWTEHATRLGLVGLGVIQFGNSMTLPGDVTQLSSFWRANFHIVLGIALVLVALMTLMYALMTFKARSRRVYARKKIRFDDSWGPTVLTVFLAFGICVIAMMHILGRYGPMLTGDDNF</sequence>
<reference key="1">
    <citation type="journal article" date="2005" name="Science">
        <title>The genome sequence of Trypanosoma cruzi, etiologic agent of Chagas disease.</title>
        <authorList>
            <person name="El-Sayed N.M.A."/>
            <person name="Myler P.J."/>
            <person name="Bartholomeu D.C."/>
            <person name="Nilsson D."/>
            <person name="Aggarwal G."/>
            <person name="Tran A.-N."/>
            <person name="Ghedin E."/>
            <person name="Worthey E.A."/>
            <person name="Delcher A.L."/>
            <person name="Blandin G."/>
            <person name="Westenberger S.J."/>
            <person name="Caler E."/>
            <person name="Cerqueira G.C."/>
            <person name="Branche C."/>
            <person name="Haas B."/>
            <person name="Anupama A."/>
            <person name="Arner E."/>
            <person name="Aslund L."/>
            <person name="Attipoe P."/>
            <person name="Bontempi E."/>
            <person name="Bringaud F."/>
            <person name="Burton P."/>
            <person name="Cadag E."/>
            <person name="Campbell D.A."/>
            <person name="Carrington M."/>
            <person name="Crabtree J."/>
            <person name="Darban H."/>
            <person name="da Silveira J.F."/>
            <person name="de Jong P."/>
            <person name="Edwards K."/>
            <person name="Englund P.T."/>
            <person name="Fazelina G."/>
            <person name="Feldblyum T."/>
            <person name="Ferella M."/>
            <person name="Frasch A.C."/>
            <person name="Gull K."/>
            <person name="Horn D."/>
            <person name="Hou L."/>
            <person name="Huang Y."/>
            <person name="Kindlund E."/>
            <person name="Klingbeil M."/>
            <person name="Kluge S."/>
            <person name="Koo H."/>
            <person name="Lacerda D."/>
            <person name="Levin M.J."/>
            <person name="Lorenzi H."/>
            <person name="Louie T."/>
            <person name="Machado C.R."/>
            <person name="McCulloch R."/>
            <person name="McKenna A."/>
            <person name="Mizuno Y."/>
            <person name="Mottram J.C."/>
            <person name="Nelson S."/>
            <person name="Ochaya S."/>
            <person name="Osoegawa K."/>
            <person name="Pai G."/>
            <person name="Parsons M."/>
            <person name="Pentony M."/>
            <person name="Pettersson U."/>
            <person name="Pop M."/>
            <person name="Ramirez J.L."/>
            <person name="Rinta J."/>
            <person name="Robertson L."/>
            <person name="Salzberg S.L."/>
            <person name="Sanchez D.O."/>
            <person name="Seyler A."/>
            <person name="Sharma R."/>
            <person name="Shetty J."/>
            <person name="Simpson A.J."/>
            <person name="Sisk E."/>
            <person name="Tammi M.T."/>
            <person name="Tarleton R."/>
            <person name="Teixeira S."/>
            <person name="Van Aken S."/>
            <person name="Vogt C."/>
            <person name="Ward P.N."/>
            <person name="Wickstead B."/>
            <person name="Wortman J."/>
            <person name="White O."/>
            <person name="Fraser C.M."/>
            <person name="Stuart K.D."/>
            <person name="Andersson B."/>
        </authorList>
    </citation>
    <scope>NUCLEOTIDE SEQUENCE [LARGE SCALE GENOMIC DNA]</scope>
    <source>
        <strain>CL Brener</strain>
    </source>
</reference>
<reference key="2">
    <citation type="journal article" date="2014" name="J. Eukaryot. Microbiol.">
        <title>The acidocalcisome vacuolar transporter chaperone 4 catalyzes the synthesis of polyphosphate in insect-stages of Trypanosoma brucei and T. cruzi.</title>
        <authorList>
            <person name="Ulrich P.N."/>
            <person name="Lander N."/>
            <person name="Kurup S.P."/>
            <person name="Reiss L."/>
            <person name="Brewer J."/>
            <person name="Soares Medeiros L.C."/>
            <person name="Miranda K."/>
            <person name="Docampo R."/>
        </authorList>
    </citation>
    <scope>FUNCTION</scope>
    <scope>CATALYTIC ACTIVITY</scope>
    <scope>BIOPHYSICOCHEMICAL PROPERTIES</scope>
    <scope>SUBCELLULAR LOCATION</scope>
    <scope>DISRUPTION PHENOTYPE</scope>
    <source>
        <strain>Berkeley</strain>
    </source>
</reference>
<name>VTC4_TRYCC</name>
<dbReference type="EC" id="2.7.4.1" evidence="1"/>
<dbReference type="EMBL" id="AAHK01000017">
    <property type="protein sequence ID" value="EAN99491.1"/>
    <property type="molecule type" value="Genomic_DNA"/>
</dbReference>
<dbReference type="RefSeq" id="XP_821342.1">
    <property type="nucleotide sequence ID" value="XM_816249.1"/>
</dbReference>
<dbReference type="SMR" id="Q4E409"/>
<dbReference type="FunCoup" id="Q4E409">
    <property type="interactions" value="41"/>
</dbReference>
<dbReference type="STRING" id="353153.Q4E409"/>
<dbReference type="PaxDb" id="353153-Q4E409"/>
<dbReference type="EnsemblProtists" id="EAN99491">
    <property type="protein sequence ID" value="EAN99491"/>
    <property type="gene ID" value="Tc00.1047053511127.100"/>
</dbReference>
<dbReference type="GeneID" id="3554225"/>
<dbReference type="KEGG" id="tcr:511127.100"/>
<dbReference type="eggNOG" id="KOG1161">
    <property type="taxonomic scope" value="Eukaryota"/>
</dbReference>
<dbReference type="eggNOG" id="KOG4580">
    <property type="taxonomic scope" value="Eukaryota"/>
</dbReference>
<dbReference type="InParanoid" id="Q4E409"/>
<dbReference type="OMA" id="HKAAWLD"/>
<dbReference type="Proteomes" id="UP000002296">
    <property type="component" value="Unassembled WGS sequence"/>
</dbReference>
<dbReference type="GO" id="GO:0033102">
    <property type="term" value="C:acidocalcisome membrane"/>
    <property type="evidence" value="ECO:0007669"/>
    <property type="project" value="UniProtKB-SubCell"/>
</dbReference>
<dbReference type="GO" id="GO:0005524">
    <property type="term" value="F:ATP binding"/>
    <property type="evidence" value="ECO:0007669"/>
    <property type="project" value="UniProtKB-KW"/>
</dbReference>
<dbReference type="GO" id="GO:0046872">
    <property type="term" value="F:metal ion binding"/>
    <property type="evidence" value="ECO:0007669"/>
    <property type="project" value="UniProtKB-KW"/>
</dbReference>
<dbReference type="GO" id="GO:0016740">
    <property type="term" value="F:transferase activity"/>
    <property type="evidence" value="ECO:0007669"/>
    <property type="project" value="UniProtKB-KW"/>
</dbReference>
<dbReference type="GO" id="GO:0006799">
    <property type="term" value="P:polyphosphate biosynthetic process"/>
    <property type="evidence" value="ECO:0007669"/>
    <property type="project" value="UniProtKB-ARBA"/>
</dbReference>
<dbReference type="CDD" id="cd07751">
    <property type="entry name" value="PolyPPase_VTC4_like"/>
    <property type="match status" value="1"/>
</dbReference>
<dbReference type="Gene3D" id="3.20.100.30">
    <property type="entry name" value="VTC, catalytic tunnel domain"/>
    <property type="match status" value="1"/>
</dbReference>
<dbReference type="InterPro" id="IPR003807">
    <property type="entry name" value="DUF202"/>
</dbReference>
<dbReference type="InterPro" id="IPR051572">
    <property type="entry name" value="VTC_Complex_Subunit"/>
</dbReference>
<dbReference type="InterPro" id="IPR018966">
    <property type="entry name" value="VTC_domain"/>
</dbReference>
<dbReference type="InterPro" id="IPR042267">
    <property type="entry name" value="VTC_sf"/>
</dbReference>
<dbReference type="PANTHER" id="PTHR46140">
    <property type="entry name" value="VACUOLAR TRANSPORTER CHAPERONE 1-RELATED"/>
    <property type="match status" value="1"/>
</dbReference>
<dbReference type="PANTHER" id="PTHR46140:SF1">
    <property type="entry name" value="VACUOLAR TRANSPORTER CHAPERONE COMPLEX SUBUNIT 4-RELATED"/>
    <property type="match status" value="1"/>
</dbReference>
<dbReference type="Pfam" id="PF02656">
    <property type="entry name" value="DUF202"/>
    <property type="match status" value="1"/>
</dbReference>
<dbReference type="Pfam" id="PF09359">
    <property type="entry name" value="VTC"/>
    <property type="match status" value="1"/>
</dbReference>